<accession>Q5HZA3</accession>
<reference key="1">
    <citation type="journal article" date="2004" name="Genome Res.">
        <title>The status, quality, and expansion of the NIH full-length cDNA project: the Mammalian Gene Collection (MGC).</title>
        <authorList>
            <consortium name="The MGC Project Team"/>
        </authorList>
    </citation>
    <scope>NUCLEOTIDE SEQUENCE [LARGE SCALE MRNA]</scope>
    <source>
        <tissue>Brain</tissue>
    </source>
</reference>
<dbReference type="EMBL" id="BC089115">
    <property type="protein sequence ID" value="AAH89115.1"/>
    <property type="molecule type" value="mRNA"/>
</dbReference>
<dbReference type="RefSeq" id="NP_001014087.1">
    <property type="nucleotide sequence ID" value="NM_001014065.2"/>
</dbReference>
<dbReference type="RefSeq" id="XP_006257510.1">
    <property type="nucleotide sequence ID" value="XM_006257448.5"/>
</dbReference>
<dbReference type="RefSeq" id="XP_006257511.1">
    <property type="nucleotide sequence ID" value="XM_006257449.5"/>
</dbReference>
<dbReference type="RefSeq" id="XP_006257513.1">
    <property type="nucleotide sequence ID" value="XM_006257451.5"/>
</dbReference>
<dbReference type="RefSeq" id="XP_006257514.1">
    <property type="nucleotide sequence ID" value="XM_006257452.5"/>
</dbReference>
<dbReference type="RefSeq" id="XP_017457523.1">
    <property type="nucleotide sequence ID" value="XM_017602034.3"/>
</dbReference>
<dbReference type="RefSeq" id="XP_017457524.1">
    <property type="nucleotide sequence ID" value="XM_017602035.3"/>
</dbReference>
<dbReference type="RefSeq" id="XP_017457525.1">
    <property type="nucleotide sequence ID" value="XM_017602036.3"/>
</dbReference>
<dbReference type="RefSeq" id="XP_063136055.1">
    <property type="nucleotide sequence ID" value="XM_063279985.1"/>
</dbReference>
<dbReference type="RefSeq" id="XP_063136056.1">
    <property type="nucleotide sequence ID" value="XM_063279986.1"/>
</dbReference>
<dbReference type="RefSeq" id="XP_063136057.1">
    <property type="nucleotide sequence ID" value="XM_063279987.1"/>
</dbReference>
<dbReference type="RefSeq" id="XP_063136058.1">
    <property type="nucleotide sequence ID" value="XM_063279988.1"/>
</dbReference>
<dbReference type="SMR" id="Q5HZA3"/>
<dbReference type="FunCoup" id="Q5HZA3">
    <property type="interactions" value="32"/>
</dbReference>
<dbReference type="STRING" id="10116.ENSRNOP00000017567"/>
<dbReference type="PhosphoSitePlus" id="Q5HZA3"/>
<dbReference type="PaxDb" id="10116-ENSRNOP00000017567"/>
<dbReference type="Ensembl" id="ENSRNOT00000017567.5">
    <property type="protein sequence ID" value="ENSRNOP00000017567.4"/>
    <property type="gene ID" value="ENSRNOG00000013162.5"/>
</dbReference>
<dbReference type="Ensembl" id="ENSRNOT00000094904.1">
    <property type="protein sequence ID" value="ENSRNOP00000077726.1"/>
    <property type="gene ID" value="ENSRNOG00000013162.5"/>
</dbReference>
<dbReference type="Ensembl" id="ENSRNOT00000111671.1">
    <property type="protein sequence ID" value="ENSRNOP00000090059.1"/>
    <property type="gene ID" value="ENSRNOG00000013162.5"/>
</dbReference>
<dbReference type="Ensembl" id="ENSRNOT00000113244.1">
    <property type="protein sequence ID" value="ENSRNOP00000079816.1"/>
    <property type="gene ID" value="ENSRNOG00000013162.5"/>
</dbReference>
<dbReference type="GeneID" id="313436"/>
<dbReference type="KEGG" id="rno:313436"/>
<dbReference type="UCSC" id="RGD:1359439">
    <property type="organism name" value="rat"/>
</dbReference>
<dbReference type="AGR" id="RGD:1359439"/>
<dbReference type="CTD" id="170261"/>
<dbReference type="RGD" id="1359439">
    <property type="gene designation" value="Zcchc12"/>
</dbReference>
<dbReference type="eggNOG" id="ENOG502RU0T">
    <property type="taxonomic scope" value="Eukaryota"/>
</dbReference>
<dbReference type="GeneTree" id="ENSGT01030000234522"/>
<dbReference type="HOGENOM" id="CLU_686127_0_0_1"/>
<dbReference type="InParanoid" id="Q5HZA3"/>
<dbReference type="OMA" id="RKHTIRC"/>
<dbReference type="OrthoDB" id="115435at2759"/>
<dbReference type="PhylomeDB" id="Q5HZA3"/>
<dbReference type="TreeFam" id="TF335054"/>
<dbReference type="PRO" id="PR:Q5HZA3"/>
<dbReference type="Proteomes" id="UP000002494">
    <property type="component" value="Chromosome X"/>
</dbReference>
<dbReference type="Bgee" id="ENSRNOG00000013162">
    <property type="expression patterns" value="Expressed in brain and 20 other cell types or tissues"/>
</dbReference>
<dbReference type="GO" id="GO:0016607">
    <property type="term" value="C:nuclear speck"/>
    <property type="evidence" value="ECO:0000266"/>
    <property type="project" value="RGD"/>
</dbReference>
<dbReference type="GO" id="GO:0005634">
    <property type="term" value="C:nucleus"/>
    <property type="evidence" value="ECO:0000266"/>
    <property type="project" value="RGD"/>
</dbReference>
<dbReference type="GO" id="GO:0016605">
    <property type="term" value="C:PML body"/>
    <property type="evidence" value="ECO:0000266"/>
    <property type="project" value="RGD"/>
</dbReference>
<dbReference type="GO" id="GO:0003676">
    <property type="term" value="F:nucleic acid binding"/>
    <property type="evidence" value="ECO:0007669"/>
    <property type="project" value="InterPro"/>
</dbReference>
<dbReference type="GO" id="GO:0032183">
    <property type="term" value="F:SUMO binding"/>
    <property type="evidence" value="ECO:0000266"/>
    <property type="project" value="RGD"/>
</dbReference>
<dbReference type="GO" id="GO:0003713">
    <property type="term" value="F:transcription coactivator activity"/>
    <property type="evidence" value="ECO:0000266"/>
    <property type="project" value="RGD"/>
</dbReference>
<dbReference type="GO" id="GO:0008270">
    <property type="term" value="F:zinc ion binding"/>
    <property type="evidence" value="ECO:0007669"/>
    <property type="project" value="UniProtKB-KW"/>
</dbReference>
<dbReference type="GO" id="GO:0030509">
    <property type="term" value="P:BMP signaling pathway"/>
    <property type="evidence" value="ECO:0000266"/>
    <property type="project" value="RGD"/>
</dbReference>
<dbReference type="GO" id="GO:0045944">
    <property type="term" value="P:positive regulation of transcription by RNA polymerase II"/>
    <property type="evidence" value="ECO:0000266"/>
    <property type="project" value="RGD"/>
</dbReference>
<dbReference type="InterPro" id="IPR026523">
    <property type="entry name" value="PNMA"/>
</dbReference>
<dbReference type="InterPro" id="IPR048270">
    <property type="entry name" value="PNMA_C"/>
</dbReference>
<dbReference type="InterPro" id="IPR001878">
    <property type="entry name" value="Znf_CCHC"/>
</dbReference>
<dbReference type="PANTHER" id="PTHR23095">
    <property type="entry name" value="PARANEOPLASTIC ANTIGEN"/>
    <property type="match status" value="1"/>
</dbReference>
<dbReference type="PANTHER" id="PTHR23095:SF18">
    <property type="entry name" value="ZINC FINGER CCHC DOMAIN-CONTAINING PROTEIN 12"/>
    <property type="match status" value="1"/>
</dbReference>
<dbReference type="Pfam" id="PF14893">
    <property type="entry name" value="PNMA"/>
    <property type="match status" value="1"/>
</dbReference>
<dbReference type="PROSITE" id="PS50158">
    <property type="entry name" value="ZF_CCHC"/>
    <property type="match status" value="1"/>
</dbReference>
<protein>
    <recommendedName>
        <fullName>Zinc finger CCHC domain-containing protein 12</fullName>
    </recommendedName>
</protein>
<feature type="chain" id="PRO_0000150973" description="Zinc finger CCHC domain-containing protein 12">
    <location>
        <begin position="1"/>
        <end position="401"/>
    </location>
</feature>
<feature type="zinc finger region" description="CCHC-type" evidence="2">
    <location>
        <begin position="345"/>
        <end position="362"/>
    </location>
</feature>
<feature type="region of interest" description="Disordered" evidence="3">
    <location>
        <begin position="1"/>
        <end position="20"/>
    </location>
</feature>
<feature type="region of interest" description="Disordered" evidence="3">
    <location>
        <begin position="270"/>
        <end position="292"/>
    </location>
</feature>
<feature type="compositionally biased region" description="Acidic residues" evidence="3">
    <location>
        <begin position="270"/>
        <end position="282"/>
    </location>
</feature>
<comment type="function">
    <text evidence="1">Transcriptional coactivator in the bone morphogenetic protein (BMP)-signaling pathway. It positively modulates BMP signaling by interacting with SMAD1 and associating with CBP in the transcription complex. It contributes to the BMP-induced enhancement of cholinergic-neuron-specific gene expression (By similarity).</text>
</comment>
<comment type="subunit">
    <text evidence="1">Interacts with SMAD1 and CREB-binding protein (CBP). Forms a protein-DNA complex through its association with SMAD1 (By similarity).</text>
</comment>
<comment type="similarity">
    <text evidence="4">Belongs to the ZCCHC12 family.</text>
</comment>
<organism>
    <name type="scientific">Rattus norvegicus</name>
    <name type="common">Rat</name>
    <dbReference type="NCBI Taxonomy" id="10116"/>
    <lineage>
        <taxon>Eukaryota</taxon>
        <taxon>Metazoa</taxon>
        <taxon>Chordata</taxon>
        <taxon>Craniata</taxon>
        <taxon>Vertebrata</taxon>
        <taxon>Euteleostomi</taxon>
        <taxon>Mammalia</taxon>
        <taxon>Eutheria</taxon>
        <taxon>Euarchontoglires</taxon>
        <taxon>Glires</taxon>
        <taxon>Rodentia</taxon>
        <taxon>Myomorpha</taxon>
        <taxon>Muroidea</taxon>
        <taxon>Muridae</taxon>
        <taxon>Murinae</taxon>
        <taxon>Rattus</taxon>
    </lineage>
</organism>
<gene>
    <name type="primary">Zcchc12</name>
</gene>
<sequence length="401" mass="45154">MASILSRMGNSRGQNSPLPPWAHSMLRSLGRSLGPLMASMAERNMKLFSGRAEPAQGEETFENWLSQVTAVLPDWHMPEEEKVRRLMRTLRGPAREVMRLLQAANPCLDVEDFLRAMKLVFGESESSVTAHSKFVNTVQEPGEKPSLYVIRLEVQLQNAIQAGVFAEREANQARLHQLLVGAEMSTDLRFRLKSLLRVYANEPERLPNFLELIRMIREEEEWEEAFIHPKRPRRSQSVERALSPTFQSSPPVMISSIDCNVIEIDDSPDDSDEDVILVEPDDPPLPSSSAGPSFLGRAVSEDQVLVIESPNIFEIQAPSTSSGAGRKNNNNFGELRRARKRKHTVHCSHCGEEGHSKETCDNESDRGQVFENLIITLQELTHTEERAREIFGEAIGLSELH</sequence>
<evidence type="ECO:0000250" key="1"/>
<evidence type="ECO:0000255" key="2">
    <source>
        <dbReference type="PROSITE-ProRule" id="PRU00047"/>
    </source>
</evidence>
<evidence type="ECO:0000256" key="3">
    <source>
        <dbReference type="SAM" id="MobiDB-lite"/>
    </source>
</evidence>
<evidence type="ECO:0000305" key="4"/>
<proteinExistence type="evidence at transcript level"/>
<keyword id="KW-0479">Metal-binding</keyword>
<keyword id="KW-1185">Reference proteome</keyword>
<keyword id="KW-0804">Transcription</keyword>
<keyword id="KW-0805">Transcription regulation</keyword>
<keyword id="KW-0862">Zinc</keyword>
<keyword id="KW-0863">Zinc-finger</keyword>
<name>ZCH12_RAT</name>